<accession>Q2FZF1</accession>
<organism>
    <name type="scientific">Staphylococcus aureus (strain NCTC 8325 / PS 47)</name>
    <dbReference type="NCBI Taxonomy" id="93061"/>
    <lineage>
        <taxon>Bacteria</taxon>
        <taxon>Bacillati</taxon>
        <taxon>Bacillota</taxon>
        <taxon>Bacilli</taxon>
        <taxon>Bacillales</taxon>
        <taxon>Staphylococcaceae</taxon>
        <taxon>Staphylococcus</taxon>
    </lineage>
</organism>
<reference key="1">
    <citation type="book" date="2006" name="Gram positive pathogens, 2nd edition">
        <title>The Staphylococcus aureus NCTC 8325 genome.</title>
        <editorList>
            <person name="Fischetti V."/>
            <person name="Novick R."/>
            <person name="Ferretti J."/>
            <person name="Portnoy D."/>
            <person name="Rood J."/>
        </editorList>
        <authorList>
            <person name="Gillaspy A.F."/>
            <person name="Worrell V."/>
            <person name="Orvis J."/>
            <person name="Roe B.A."/>
            <person name="Dyer D.W."/>
            <person name="Iandolo J.J."/>
        </authorList>
    </citation>
    <scope>NUCLEOTIDE SEQUENCE [LARGE SCALE GENOMIC DNA]</scope>
    <source>
        <strain>NCTC 8325 / PS 47</strain>
    </source>
</reference>
<protein>
    <recommendedName>
        <fullName evidence="1">Large ribosomal subunit protein bL32</fullName>
    </recommendedName>
    <alternativeName>
        <fullName evidence="2">50S ribosomal protein L32</fullName>
    </alternativeName>
</protein>
<sequence>MAVPKRRTSKTRKNKRRTHFKISVPGMTECPNCGREYKLSHRVCKNCGSYNGEEVAAK</sequence>
<proteinExistence type="evidence at protein level"/>
<gene>
    <name evidence="1" type="primary">rpmF</name>
    <name type="ordered locus">SAOUHSC_01078</name>
</gene>
<keyword id="KW-0002">3D-structure</keyword>
<keyword id="KW-1185">Reference proteome</keyword>
<keyword id="KW-0687">Ribonucleoprotein</keyword>
<keyword id="KW-0689">Ribosomal protein</keyword>
<comment type="similarity">
    <text evidence="1">Belongs to the bacterial ribosomal protein bL32 family.</text>
</comment>
<comment type="sequence caution" evidence="2">
    <conflict type="frameshift">
        <sequence resource="EMBL-CDS" id="ABD30195"/>
    </conflict>
</comment>
<dbReference type="EMBL" id="CP000253">
    <property type="protein sequence ID" value="ABD30195.1"/>
    <property type="status" value="ALT_FRAME"/>
    <property type="molecule type" value="Genomic_DNA"/>
</dbReference>
<dbReference type="PDB" id="4WCE">
    <property type="method" value="X-ray"/>
    <property type="resolution" value="3.53 A"/>
    <property type="chains" value="Z=1-58"/>
</dbReference>
<dbReference type="PDB" id="4WF9">
    <property type="method" value="X-ray"/>
    <property type="resolution" value="3.43 A"/>
    <property type="chains" value="Z=1-58"/>
</dbReference>
<dbReference type="PDB" id="4WFA">
    <property type="method" value="X-ray"/>
    <property type="resolution" value="3.39 A"/>
    <property type="chains" value="Z=1-58"/>
</dbReference>
<dbReference type="PDB" id="4WFB">
    <property type="method" value="X-ray"/>
    <property type="resolution" value="3.43 A"/>
    <property type="chains" value="Z=1-58"/>
</dbReference>
<dbReference type="PDB" id="5HKV">
    <property type="method" value="X-ray"/>
    <property type="resolution" value="3.66 A"/>
    <property type="chains" value="Z=1-58"/>
</dbReference>
<dbReference type="PDB" id="5HL7">
    <property type="method" value="X-ray"/>
    <property type="resolution" value="3.55 A"/>
    <property type="chains" value="Z=1-58"/>
</dbReference>
<dbReference type="PDB" id="5LI0">
    <property type="method" value="EM"/>
    <property type="resolution" value="3.80 A"/>
    <property type="chains" value="4=2-57"/>
</dbReference>
<dbReference type="PDB" id="5ND8">
    <property type="method" value="EM"/>
    <property type="resolution" value="3.70 A"/>
    <property type="chains" value="4=1-58"/>
</dbReference>
<dbReference type="PDB" id="5ND9">
    <property type="method" value="EM"/>
    <property type="resolution" value="3.70 A"/>
    <property type="chains" value="4=1-58"/>
</dbReference>
<dbReference type="PDB" id="5NRG">
    <property type="method" value="X-ray"/>
    <property type="resolution" value="3.44 A"/>
    <property type="chains" value="Z=1-58"/>
</dbReference>
<dbReference type="PDB" id="5TCU">
    <property type="method" value="EM"/>
    <property type="resolution" value="3.90 A"/>
    <property type="chains" value="LE=2-48"/>
</dbReference>
<dbReference type="PDB" id="6DDD">
    <property type="method" value="EM"/>
    <property type="resolution" value="3.10 A"/>
    <property type="chains" value="N=1-58"/>
</dbReference>
<dbReference type="PDB" id="6DDG">
    <property type="method" value="EM"/>
    <property type="resolution" value="3.10 A"/>
    <property type="chains" value="N=1-58"/>
</dbReference>
<dbReference type="PDB" id="6HMA">
    <property type="method" value="EM"/>
    <property type="resolution" value="2.65 A"/>
    <property type="chains" value="Z=2-50"/>
</dbReference>
<dbReference type="PDB" id="6SJ6">
    <property type="method" value="EM"/>
    <property type="resolution" value="3.23 A"/>
    <property type="chains" value="4=1-58"/>
</dbReference>
<dbReference type="PDB" id="6WQN">
    <property type="method" value="EM"/>
    <property type="resolution" value="2.90 A"/>
    <property type="chains" value="N=1-58"/>
</dbReference>
<dbReference type="PDB" id="6WQQ">
    <property type="method" value="EM"/>
    <property type="resolution" value="3.10 A"/>
    <property type="chains" value="N=1-58"/>
</dbReference>
<dbReference type="PDB" id="6WRS">
    <property type="method" value="EM"/>
    <property type="resolution" value="3.20 A"/>
    <property type="chains" value="N=1-58"/>
</dbReference>
<dbReference type="PDB" id="6WRU">
    <property type="method" value="EM"/>
    <property type="resolution" value="3.10 A"/>
    <property type="chains" value="N=1-58"/>
</dbReference>
<dbReference type="PDB" id="6YEF">
    <property type="method" value="EM"/>
    <property type="resolution" value="3.20 A"/>
    <property type="chains" value="4=1-58"/>
</dbReference>
<dbReference type="PDB" id="7ASM">
    <property type="method" value="EM"/>
    <property type="resolution" value="2.48 A"/>
    <property type="chains" value="Z=2-50"/>
</dbReference>
<dbReference type="PDB" id="7ASN">
    <property type="method" value="EM"/>
    <property type="resolution" value="2.73 A"/>
    <property type="chains" value="b=2-50"/>
</dbReference>
<dbReference type="PDB" id="7NHM">
    <property type="method" value="EM"/>
    <property type="resolution" value="3.10 A"/>
    <property type="chains" value="5=1-58"/>
</dbReference>
<dbReference type="PDB" id="7TTU">
    <property type="method" value="EM"/>
    <property type="resolution" value="3.00 A"/>
    <property type="chains" value="N=1-58"/>
</dbReference>
<dbReference type="PDB" id="7TTW">
    <property type="method" value="EM"/>
    <property type="resolution" value="2.90 A"/>
    <property type="chains" value="N=1-58"/>
</dbReference>
<dbReference type="PDB" id="8P2F">
    <property type="method" value="EM"/>
    <property type="resolution" value="2.44 A"/>
    <property type="chains" value="5=1-58"/>
</dbReference>
<dbReference type="PDB" id="8P2G">
    <property type="method" value="EM"/>
    <property type="resolution" value="2.02 A"/>
    <property type="chains" value="5=1-58"/>
</dbReference>
<dbReference type="PDB" id="8P2H">
    <property type="method" value="EM"/>
    <property type="resolution" value="2.49 A"/>
    <property type="chains" value="5=1-58"/>
</dbReference>
<dbReference type="PDBsum" id="4WCE"/>
<dbReference type="PDBsum" id="4WF9"/>
<dbReference type="PDBsum" id="4WFA"/>
<dbReference type="PDBsum" id="4WFB"/>
<dbReference type="PDBsum" id="5HKV"/>
<dbReference type="PDBsum" id="5HL7"/>
<dbReference type="PDBsum" id="5LI0"/>
<dbReference type="PDBsum" id="5ND8"/>
<dbReference type="PDBsum" id="5ND9"/>
<dbReference type="PDBsum" id="5NRG"/>
<dbReference type="PDBsum" id="5TCU"/>
<dbReference type="PDBsum" id="6DDD"/>
<dbReference type="PDBsum" id="6DDG"/>
<dbReference type="PDBsum" id="6HMA"/>
<dbReference type="PDBsum" id="6SJ6"/>
<dbReference type="PDBsum" id="6WQN"/>
<dbReference type="PDBsum" id="6WQQ"/>
<dbReference type="PDBsum" id="6WRS"/>
<dbReference type="PDBsum" id="6WRU"/>
<dbReference type="PDBsum" id="6YEF"/>
<dbReference type="PDBsum" id="7ASM"/>
<dbReference type="PDBsum" id="7ASN"/>
<dbReference type="PDBsum" id="7NHM"/>
<dbReference type="PDBsum" id="7TTU"/>
<dbReference type="PDBsum" id="7TTW"/>
<dbReference type="PDBsum" id="8P2F"/>
<dbReference type="PDBsum" id="8P2G"/>
<dbReference type="PDBsum" id="8P2H"/>
<dbReference type="EMDB" id="EMD-10212"/>
<dbReference type="EMDB" id="EMD-10791"/>
<dbReference type="EMDB" id="EMD-12333"/>
<dbReference type="EMDB" id="EMD-17363"/>
<dbReference type="EMDB" id="EMD-17364"/>
<dbReference type="EMDB" id="EMD-17365"/>
<dbReference type="EMDB" id="EMD-3624"/>
<dbReference type="EMDB" id="EMD-3625"/>
<dbReference type="EMDB" id="EMD-4050"/>
<dbReference type="SMR" id="Q2FZF1"/>
<dbReference type="IntAct" id="Q2FZF1">
    <property type="interactions" value="1"/>
</dbReference>
<dbReference type="STRING" id="93061.SAOUHSC_01078"/>
<dbReference type="PaxDb" id="1280-SAXN108_1123"/>
<dbReference type="eggNOG" id="COG0333">
    <property type="taxonomic scope" value="Bacteria"/>
</dbReference>
<dbReference type="HOGENOM" id="CLU_218439_0_0_9"/>
<dbReference type="EvolutionaryTrace" id="Q2FZF1"/>
<dbReference type="Proteomes" id="UP000008816">
    <property type="component" value="Chromosome"/>
</dbReference>
<dbReference type="GO" id="GO:0015934">
    <property type="term" value="C:large ribosomal subunit"/>
    <property type="evidence" value="ECO:0007669"/>
    <property type="project" value="InterPro"/>
</dbReference>
<dbReference type="GO" id="GO:0003735">
    <property type="term" value="F:structural constituent of ribosome"/>
    <property type="evidence" value="ECO:0000318"/>
    <property type="project" value="GO_Central"/>
</dbReference>
<dbReference type="GO" id="GO:0006412">
    <property type="term" value="P:translation"/>
    <property type="evidence" value="ECO:0007669"/>
    <property type="project" value="UniProtKB-UniRule"/>
</dbReference>
<dbReference type="Gene3D" id="1.20.5.640">
    <property type="entry name" value="Single helix bin"/>
    <property type="match status" value="1"/>
</dbReference>
<dbReference type="HAMAP" id="MF_00340">
    <property type="entry name" value="Ribosomal_bL32"/>
    <property type="match status" value="1"/>
</dbReference>
<dbReference type="InterPro" id="IPR002677">
    <property type="entry name" value="Ribosomal_bL32"/>
</dbReference>
<dbReference type="InterPro" id="IPR044957">
    <property type="entry name" value="Ribosomal_bL32_bact"/>
</dbReference>
<dbReference type="InterPro" id="IPR011332">
    <property type="entry name" value="Ribosomal_zn-bd"/>
</dbReference>
<dbReference type="NCBIfam" id="TIGR01031">
    <property type="entry name" value="rpmF_bact"/>
    <property type="match status" value="1"/>
</dbReference>
<dbReference type="PANTHER" id="PTHR35534">
    <property type="entry name" value="50S RIBOSOMAL PROTEIN L32"/>
    <property type="match status" value="1"/>
</dbReference>
<dbReference type="PANTHER" id="PTHR35534:SF2">
    <property type="entry name" value="LARGE RIBOSOMAL SUBUNIT PROTEIN BL32"/>
    <property type="match status" value="1"/>
</dbReference>
<dbReference type="Pfam" id="PF01783">
    <property type="entry name" value="Ribosomal_L32p"/>
    <property type="match status" value="1"/>
</dbReference>
<dbReference type="SUPFAM" id="SSF57829">
    <property type="entry name" value="Zn-binding ribosomal proteins"/>
    <property type="match status" value="1"/>
</dbReference>
<name>RL32_STAA8</name>
<feature type="chain" id="PRO_0000296571" description="Large ribosomal subunit protein bL32">
    <location>
        <begin position="1"/>
        <end position="58"/>
    </location>
</feature>
<feature type="helix" evidence="5">
    <location>
        <begin position="10"/>
        <end position="16"/>
    </location>
</feature>
<feature type="helix" evidence="3">
    <location>
        <begin position="17"/>
        <end position="19"/>
    </location>
</feature>
<feature type="strand" evidence="4">
    <location>
        <begin position="27"/>
        <end position="29"/>
    </location>
</feature>
<feature type="strand" evidence="5">
    <location>
        <begin position="31"/>
        <end position="34"/>
    </location>
</feature>
<feature type="strand" evidence="5">
    <location>
        <begin position="36"/>
        <end position="38"/>
    </location>
</feature>
<feature type="strand" evidence="5">
    <location>
        <begin position="45"/>
        <end position="48"/>
    </location>
</feature>
<evidence type="ECO:0000255" key="1">
    <source>
        <dbReference type="HAMAP-Rule" id="MF_00340"/>
    </source>
</evidence>
<evidence type="ECO:0000305" key="2"/>
<evidence type="ECO:0007829" key="3">
    <source>
        <dbReference type="PDB" id="6DDD"/>
    </source>
</evidence>
<evidence type="ECO:0007829" key="4">
    <source>
        <dbReference type="PDB" id="6WQN"/>
    </source>
</evidence>
<evidence type="ECO:0007829" key="5">
    <source>
        <dbReference type="PDB" id="7ASM"/>
    </source>
</evidence>